<comment type="function">
    <text evidence="3 4 5">A type II topoisomerase that negatively supercoils closed circular double-stranded (ds) DNA in an ATP-dependent manner to modulate DNA topology and maintain chromosomes in an underwound state, and also catalyzes the interconversion of other topological isomers of double-stranded DNA rings, including catenanes and knotted rings (PubMed:16267301). Replenishes negative supercoiling downstream of highly transcribed genes to help control overall chromosomal supercoiling density (PubMed:22916023). E.coli makes 15% more negative supercoils in pBR322 plasmid DNA than S.typhimurium; the S.typhimurium GyrB subunit is toxic in E.coli, while the E.coli copy can be expressed in S.typhimurium even though the 2 subunits have 777/804 residues identical (PubMed:17400739).</text>
</comment>
<comment type="function">
    <text>Negative supercoiling favors strand separation, and DNA replication, transcription, recombination and repair, all of which involve strand separation. Type II topoisomerases break and join 2 DNA strands simultaneously in an ATP-dependent manner.</text>
</comment>
<comment type="catalytic activity">
    <reaction evidence="2">
        <text>ATP-dependent breakage, passage and rejoining of double-stranded DNA.</text>
        <dbReference type="EC" id="5.6.2.2"/>
    </reaction>
</comment>
<comment type="cofactor">
    <cofactor evidence="2">
        <name>Mg(2+)</name>
        <dbReference type="ChEBI" id="CHEBI:18420"/>
    </cofactor>
    <cofactor evidence="2">
        <name>Mn(2+)</name>
        <dbReference type="ChEBI" id="CHEBI:29035"/>
    </cofactor>
    <cofactor evidence="2">
        <name>Ca(2+)</name>
        <dbReference type="ChEBI" id="CHEBI:29108"/>
    </cofactor>
    <text evidence="2">Binds two Mg(2+) per subunit. The magnesium ions form salt bridges with both the protein and the DNA. Can also accept other divalent metal cations, such as Mn(2+) or Ca(2+).</text>
</comment>
<comment type="subunit">
    <text evidence="2">Heterotetramer, composed of two GyrA and two GyrB chains. In the heterotetramer, GyrA contains the active site tyrosine that forms a transient covalent intermediate with DNA, while GyrB binds cofactors and catalyzes ATP hydrolysis.</text>
</comment>
<comment type="subcellular location">
    <subcellularLocation>
        <location evidence="2">Cytoplasm</location>
    </subcellularLocation>
</comment>
<comment type="miscellaneous">
    <text evidence="2">Few gyrases are as efficient as E.coli at forming negative supercoils. Not all organisms have 2 type II topoisomerases; in organisms with a single type II topoisomerase this enzyme also has to decatenate newly replicated chromosomes.</text>
</comment>
<comment type="similarity">
    <text evidence="2">Belongs to the type II topoisomerase GyrB family.</text>
</comment>
<evidence type="ECO:0000250" key="1"/>
<evidence type="ECO:0000255" key="2">
    <source>
        <dbReference type="HAMAP-Rule" id="MF_01898"/>
    </source>
</evidence>
<evidence type="ECO:0000269" key="3">
    <source>
    </source>
</evidence>
<evidence type="ECO:0000269" key="4">
    <source>
    </source>
</evidence>
<evidence type="ECO:0000269" key="5">
    <source>
    </source>
</evidence>
<evidence type="ECO:0000269" key="6">
    <source ref="1"/>
</evidence>
<evidence type="ECO:0000305" key="7"/>
<reference key="1">
    <citation type="submission" date="1996-09" db="EMBL/GenBank/DDBJ databases">
        <authorList>
            <person name="Kratz B."/>
            <person name="Heisig P."/>
            <person name="Finklenburg B."/>
            <person name="Ludwig M."/>
        </authorList>
    </citation>
    <scope>NUCLEOTIDE SEQUENCE [GENOMIC DNA]</scope>
    <scope>VARIANT QUINOLONE RESISTANT PHE-464</scope>
    <source>
        <strain>Copenhagen 685/89</strain>
        <strain>Copenhagen 80190</strain>
    </source>
</reference>
<reference key="2">
    <citation type="journal article" date="2001" name="Nature">
        <title>Complete genome sequence of Salmonella enterica serovar Typhimurium LT2.</title>
        <authorList>
            <person name="McClelland M."/>
            <person name="Sanderson K.E."/>
            <person name="Spieth J."/>
            <person name="Clifton S.W."/>
            <person name="Latreille P."/>
            <person name="Courtney L."/>
            <person name="Porwollik S."/>
            <person name="Ali J."/>
            <person name="Dante M."/>
            <person name="Du F."/>
            <person name="Hou S."/>
            <person name="Layman D."/>
            <person name="Leonard S."/>
            <person name="Nguyen C."/>
            <person name="Scott K."/>
            <person name="Holmes A."/>
            <person name="Grewal N."/>
            <person name="Mulvaney E."/>
            <person name="Ryan E."/>
            <person name="Sun H."/>
            <person name="Florea L."/>
            <person name="Miller W."/>
            <person name="Stoneking T."/>
            <person name="Nhan M."/>
            <person name="Waterston R."/>
            <person name="Wilson R.K."/>
        </authorList>
    </citation>
    <scope>NUCLEOTIDE SEQUENCE [LARGE SCALE GENOMIC DNA]</scope>
    <source>
        <strain>LT2 / SGSC1412 / ATCC 700720</strain>
    </source>
</reference>
<reference key="3">
    <citation type="journal article" date="2005" name="J. Bacteriol.">
        <title>A gyrase mutant with low activity disrupts supercoiling at the replication terminus.</title>
        <authorList>
            <person name="Pang Z."/>
            <person name="Chen R."/>
            <person name="Manna D."/>
            <person name="Higgins N.P."/>
        </authorList>
    </citation>
    <scope>FUNCTION</scope>
    <scope>MUTAGENESIS OF ARG-436</scope>
    <source>
        <strain>LT2 / SGSC1412 / ATCC 700720</strain>
    </source>
</reference>
<reference key="4">
    <citation type="journal article" date="2007" name="J. Bacteriol.">
        <title>Growth rate toxicity phenotypes and homeostatic supercoil control differentiate Escherichia coli from Salmonella enterica serovar Typhimurium.</title>
        <authorList>
            <person name="Champion K."/>
            <person name="Higgins N.P."/>
        </authorList>
    </citation>
    <scope>FUNCTION</scope>
    <scope>MUTAGENESIS OF ARG-436</scope>
    <source>
        <strain>LT2 / SGSC1412 / ATCC 700720</strain>
    </source>
</reference>
<reference key="5">
    <citation type="journal article" date="2012" name="PLoS Genet.">
        <title>Rates of gyrase supercoiling and transcription elongation control supercoil density in a bacterial chromosome.</title>
        <authorList>
            <person name="Rovinskiy N."/>
            <person name="Agbleke A.A."/>
            <person name="Chesnokova O."/>
            <person name="Pang Z."/>
            <person name="Higgins N.P."/>
        </authorList>
    </citation>
    <scope>FUNCTION</scope>
    <scope>MUTAGENESIS OF CYS-56 AND ARG-436</scope>
    <source>
        <strain>LT2 / SGSC1412 / ATCC 700720</strain>
    </source>
</reference>
<protein>
    <recommendedName>
        <fullName evidence="2">DNA gyrase subunit B</fullName>
        <ecNumber evidence="2">5.6.2.2</ecNumber>
    </recommendedName>
</protein>
<feature type="initiator methionine" description="Removed" evidence="1">
    <location>
        <position position="1"/>
    </location>
</feature>
<feature type="chain" id="PRO_0000145334" description="DNA gyrase subunit B">
    <location>
        <begin position="2"/>
        <end position="804"/>
    </location>
</feature>
<feature type="domain" description="Toprim" evidence="2">
    <location>
        <begin position="418"/>
        <end position="533"/>
    </location>
</feature>
<feature type="binding site" evidence="2">
    <location>
        <position position="424"/>
    </location>
    <ligand>
        <name>Mg(2+)</name>
        <dbReference type="ChEBI" id="CHEBI:18420"/>
        <label>1</label>
        <note>catalytic</note>
    </ligand>
</feature>
<feature type="binding site" evidence="2">
    <location>
        <position position="498"/>
    </location>
    <ligand>
        <name>Mg(2+)</name>
        <dbReference type="ChEBI" id="CHEBI:18420"/>
        <label>1</label>
        <note>catalytic</note>
    </ligand>
</feature>
<feature type="binding site" evidence="2">
    <location>
        <position position="498"/>
    </location>
    <ligand>
        <name>Mg(2+)</name>
        <dbReference type="ChEBI" id="CHEBI:18420"/>
        <label>2</label>
    </ligand>
</feature>
<feature type="binding site" evidence="2">
    <location>
        <position position="500"/>
    </location>
    <ligand>
        <name>Mg(2+)</name>
        <dbReference type="ChEBI" id="CHEBI:18420"/>
        <label>2</label>
    </ligand>
</feature>
<feature type="site" description="Interaction with DNA" evidence="2">
    <location>
        <position position="449"/>
    </location>
</feature>
<feature type="site" description="Interaction with DNA" evidence="2">
    <location>
        <position position="452"/>
    </location>
</feature>
<feature type="sequence variant" description="In strain: 80190; quinolone-resistant." evidence="6">
    <original>S</original>
    <variation>F</variation>
    <location>
        <position position="464"/>
    </location>
</feature>
<feature type="mutagenesis site" description="In gyrB1820TS; a temperature-sensitive mutant, 50% decreased growth rate, greatly decreased (-) supercoiling even at permissive temperature." evidence="5">
    <original>C</original>
    <variation>Y</variation>
    <location>
        <position position="56"/>
    </location>
</feature>
<feature type="mutagenesis site" description="In gyrB652TS; a temperature-sensitive mutant, no growth at 42 degrees Celsius, 36% decreased growth rate at 30 degrees Celsius (permissive), low k(cat) at 30, 37 and 42 degrees Celsius, in vivo significantly decreased (-) supercoiling even at permissive temperature." evidence="3 5">
    <original>R</original>
    <variation>S</variation>
    <location>
        <position position="436"/>
    </location>
</feature>
<feature type="sequence conflict" description="In Ref. 1; CAA69221/CAA69665." evidence="7" ref="1">
    <original>S</original>
    <variation>A</variation>
    <location>
        <position position="358"/>
    </location>
</feature>
<feature type="sequence conflict" description="In Ref. 1; CAA69221/CAA69665." evidence="7" ref="1">
    <original>S</original>
    <variation>T</variation>
    <location>
        <position position="366"/>
    </location>
</feature>
<feature type="sequence conflict" description="In Ref. 1; CAA69221/CAA69665/CAA92320." evidence="7" ref="1">
    <original>A</original>
    <variation>T</variation>
    <location>
        <position position="568"/>
    </location>
</feature>
<feature type="sequence conflict" description="In Ref. 1; CAA69221/CAA69665/CAA92320." evidence="7" ref="1">
    <original>H</original>
    <variation>S</variation>
    <location>
        <position position="571"/>
    </location>
</feature>
<feature type="sequence conflict" description="In Ref. 1; CAA69221/CAA69665/CAA92320." evidence="7" ref="1">
    <original>S</original>
    <variation>A</variation>
    <location>
        <position position="576"/>
    </location>
</feature>
<feature type="sequence conflict" description="In Ref. 1; CAA69221/CAA69665." evidence="7" ref="1">
    <original>G</original>
    <variation>N</variation>
    <location>
        <position position="595"/>
    </location>
</feature>
<feature type="sequence conflict" description="In Ref. 1; CAA69221/CAA69665/CAA92320." evidence="7" ref="1">
    <original>F</original>
    <variation>Y</variation>
    <location>
        <position position="601"/>
    </location>
</feature>
<feature type="sequence conflict" description="In Ref. 1; CAA69221/CAA69665/CAA92320." evidence="7" ref="1">
    <original>L</original>
    <variation>M</variation>
    <location>
        <position position="605"/>
    </location>
</feature>
<feature type="sequence conflict" description="In Ref. 1; CAA69221/CAA69665/CAA92320." evidence="7" ref="1">
    <original>V</original>
    <variation>I</variation>
    <location>
        <position position="610"/>
    </location>
</feature>
<feature type="sequence conflict" description="In Ref. 1; CAA69221/CAA69665." evidence="7" ref="1">
    <original>IT</original>
    <variation>VS</variation>
    <location>
        <begin position="634"/>
        <end position="635"/>
    </location>
</feature>
<feature type="sequence conflict" description="In Ref. 1; CAA69221/CAA69665/CAA92320." evidence="7" ref="1">
    <original>E</original>
    <variation>D</variation>
    <location>
        <position position="639"/>
    </location>
</feature>
<feature type="sequence conflict" description="In Ref. 1; CAA69221/CAA69665/CAA92320." evidence="7" ref="1">
    <original>T</original>
    <variation>A</variation>
    <location>
        <position position="655"/>
    </location>
</feature>
<feature type="sequence conflict" description="In Ref. 1; CAA69221/CAA69665/CAA92320." evidence="7" ref="1">
    <original>V</original>
    <variation>I</variation>
    <location>
        <position position="682"/>
    </location>
</feature>
<feature type="sequence conflict" description="In Ref. 1; CAA69221/CAA69665/CAA92320." evidence="7" ref="1">
    <original>A</original>
    <variation>G</variation>
    <location>
        <position position="685"/>
    </location>
</feature>
<feature type="sequence conflict" description="In Ref. 1; CAA69221/CAA69665/CAA92320." evidence="7" ref="1">
    <original>I</original>
    <variation>L</variation>
    <location>
        <position position="701"/>
    </location>
</feature>
<feature type="sequence conflict" description="In Ref. 1; CAA69221/CAA69665/CAA92320." evidence="7" ref="1">
    <original>T</original>
    <variation>A</variation>
    <location>
        <position position="717"/>
    </location>
</feature>
<feature type="sequence conflict" description="In Ref. 1; CAA69221/CAA69665/CAA92320." evidence="7" ref="1">
    <original>E</original>
    <variation>D</variation>
    <location>
        <position position="724"/>
    </location>
</feature>
<feature type="sequence conflict" description="In Ref. 1; CAA69221/CAA69665/CAA92320." evidence="7" ref="1">
    <original>A</original>
    <variation>S</variation>
    <location>
        <position position="735"/>
    </location>
</feature>
<feature type="sequence conflict" description="In Ref. 1; CAA69221/CAA69665/CAA92320." evidence="7" ref="1">
    <original>D</original>
    <variation>E</variation>
    <location>
        <position position="748"/>
    </location>
</feature>
<accession>P0A2I3</accession>
<accession>P77981</accession>
<accession>P77982</accession>
<accession>Q60008</accession>
<keyword id="KW-0046">Antibiotic resistance</keyword>
<keyword id="KW-0067">ATP-binding</keyword>
<keyword id="KW-0963">Cytoplasm</keyword>
<keyword id="KW-0238">DNA-binding</keyword>
<keyword id="KW-0413">Isomerase</keyword>
<keyword id="KW-0460">Magnesium</keyword>
<keyword id="KW-0479">Metal-binding</keyword>
<keyword id="KW-0547">Nucleotide-binding</keyword>
<keyword id="KW-1185">Reference proteome</keyword>
<keyword id="KW-0799">Topoisomerase</keyword>
<proteinExistence type="evidence at protein level"/>
<dbReference type="EC" id="5.6.2.2" evidence="2"/>
<dbReference type="EMBL" id="Y07916">
    <property type="protein sequence ID" value="CAA69221.1"/>
    <property type="molecule type" value="Genomic_DNA"/>
</dbReference>
<dbReference type="EMBL" id="Y08383">
    <property type="protein sequence ID" value="CAA69665.1"/>
    <property type="molecule type" value="Genomic_DNA"/>
</dbReference>
<dbReference type="EMBL" id="Z68167">
    <property type="protein sequence ID" value="CAA92320.1"/>
    <property type="molecule type" value="Genomic_DNA"/>
</dbReference>
<dbReference type="EMBL" id="AE006468">
    <property type="protein sequence ID" value="AAL22694.1"/>
    <property type="molecule type" value="Genomic_DNA"/>
</dbReference>
<dbReference type="RefSeq" id="NP_462735.1">
    <property type="nucleotide sequence ID" value="NC_003197.2"/>
</dbReference>
<dbReference type="RefSeq" id="WP_000072047.1">
    <property type="nucleotide sequence ID" value="NC_003197.2"/>
</dbReference>
<dbReference type="SMR" id="P0A2I3"/>
<dbReference type="STRING" id="99287.STM3835"/>
<dbReference type="PaxDb" id="99287-STM3835"/>
<dbReference type="GeneID" id="1255362"/>
<dbReference type="KEGG" id="stm:STM3835"/>
<dbReference type="PATRIC" id="fig|99287.12.peg.4062"/>
<dbReference type="HOGENOM" id="CLU_006146_4_1_6"/>
<dbReference type="OMA" id="QLWSTTM"/>
<dbReference type="PhylomeDB" id="P0A2I3"/>
<dbReference type="BioCyc" id="SENT99287:STM3835-MONOMER"/>
<dbReference type="Proteomes" id="UP000001014">
    <property type="component" value="Chromosome"/>
</dbReference>
<dbReference type="GO" id="GO:0005694">
    <property type="term" value="C:chromosome"/>
    <property type="evidence" value="ECO:0007669"/>
    <property type="project" value="InterPro"/>
</dbReference>
<dbReference type="GO" id="GO:0005737">
    <property type="term" value="C:cytoplasm"/>
    <property type="evidence" value="ECO:0007669"/>
    <property type="project" value="UniProtKB-SubCell"/>
</dbReference>
<dbReference type="GO" id="GO:0005524">
    <property type="term" value="F:ATP binding"/>
    <property type="evidence" value="ECO:0007669"/>
    <property type="project" value="UniProtKB-UniRule"/>
</dbReference>
<dbReference type="GO" id="GO:0003677">
    <property type="term" value="F:DNA binding"/>
    <property type="evidence" value="ECO:0007669"/>
    <property type="project" value="UniProtKB-KW"/>
</dbReference>
<dbReference type="GO" id="GO:0003918">
    <property type="term" value="F:DNA topoisomerase type II (double strand cut, ATP-hydrolyzing) activity"/>
    <property type="evidence" value="ECO:0000318"/>
    <property type="project" value="GO_Central"/>
</dbReference>
<dbReference type="GO" id="GO:0046872">
    <property type="term" value="F:metal ion binding"/>
    <property type="evidence" value="ECO:0007669"/>
    <property type="project" value="UniProtKB-KW"/>
</dbReference>
<dbReference type="GO" id="GO:0006265">
    <property type="term" value="P:DNA topological change"/>
    <property type="evidence" value="ECO:0000318"/>
    <property type="project" value="GO_Central"/>
</dbReference>
<dbReference type="GO" id="GO:0006261">
    <property type="term" value="P:DNA-templated DNA replication"/>
    <property type="evidence" value="ECO:0007669"/>
    <property type="project" value="UniProtKB-UniRule"/>
</dbReference>
<dbReference type="GO" id="GO:0046677">
    <property type="term" value="P:response to antibiotic"/>
    <property type="evidence" value="ECO:0007669"/>
    <property type="project" value="UniProtKB-KW"/>
</dbReference>
<dbReference type="CDD" id="cd16928">
    <property type="entry name" value="HATPase_GyrB-like"/>
    <property type="match status" value="1"/>
</dbReference>
<dbReference type="CDD" id="cd00822">
    <property type="entry name" value="TopoII_Trans_DNA_gyrase"/>
    <property type="match status" value="1"/>
</dbReference>
<dbReference type="CDD" id="cd03366">
    <property type="entry name" value="TOPRIM_TopoIIA_GyrB"/>
    <property type="match status" value="1"/>
</dbReference>
<dbReference type="FunFam" id="3.30.230.10:FF:000005">
    <property type="entry name" value="DNA gyrase subunit B"/>
    <property type="match status" value="1"/>
</dbReference>
<dbReference type="FunFam" id="3.30.565.10:FF:000002">
    <property type="entry name" value="DNA gyrase subunit B"/>
    <property type="match status" value="1"/>
</dbReference>
<dbReference type="FunFam" id="3.40.50.670:FF:000004">
    <property type="entry name" value="DNA gyrase subunit B"/>
    <property type="match status" value="1"/>
</dbReference>
<dbReference type="FunFam" id="3.40.50.670:FF:000005">
    <property type="entry name" value="DNA gyrase subunit B"/>
    <property type="match status" value="1"/>
</dbReference>
<dbReference type="Gene3D" id="3.10.20.690">
    <property type="match status" value="1"/>
</dbReference>
<dbReference type="Gene3D" id="3.30.230.10">
    <property type="match status" value="1"/>
</dbReference>
<dbReference type="Gene3D" id="3.40.50.670">
    <property type="match status" value="2"/>
</dbReference>
<dbReference type="Gene3D" id="3.30.565.10">
    <property type="entry name" value="Histidine kinase-like ATPase, C-terminal domain"/>
    <property type="match status" value="1"/>
</dbReference>
<dbReference type="HAMAP" id="MF_01898">
    <property type="entry name" value="GyrB"/>
    <property type="match status" value="1"/>
</dbReference>
<dbReference type="InterPro" id="IPR002288">
    <property type="entry name" value="DNA_gyrase_B_C"/>
</dbReference>
<dbReference type="InterPro" id="IPR011557">
    <property type="entry name" value="GyrB"/>
</dbReference>
<dbReference type="InterPro" id="IPR049353">
    <property type="entry name" value="GyrB_hook"/>
</dbReference>
<dbReference type="InterPro" id="IPR041423">
    <property type="entry name" value="GyrB_insert"/>
</dbReference>
<dbReference type="InterPro" id="IPR036890">
    <property type="entry name" value="HATPase_C_sf"/>
</dbReference>
<dbReference type="InterPro" id="IPR020568">
    <property type="entry name" value="Ribosomal_Su5_D2-typ_SF"/>
</dbReference>
<dbReference type="InterPro" id="IPR014721">
    <property type="entry name" value="Ribsml_uS5_D2-typ_fold_subgr"/>
</dbReference>
<dbReference type="InterPro" id="IPR001241">
    <property type="entry name" value="Topo_IIA"/>
</dbReference>
<dbReference type="InterPro" id="IPR013760">
    <property type="entry name" value="Topo_IIA-like_dom_sf"/>
</dbReference>
<dbReference type="InterPro" id="IPR000565">
    <property type="entry name" value="Topo_IIA_B"/>
</dbReference>
<dbReference type="InterPro" id="IPR013759">
    <property type="entry name" value="Topo_IIA_B_C"/>
</dbReference>
<dbReference type="InterPro" id="IPR013506">
    <property type="entry name" value="Topo_IIA_bsu_dom2"/>
</dbReference>
<dbReference type="InterPro" id="IPR018522">
    <property type="entry name" value="TopoIIA_CS"/>
</dbReference>
<dbReference type="InterPro" id="IPR006171">
    <property type="entry name" value="TOPRIM_dom"/>
</dbReference>
<dbReference type="InterPro" id="IPR034160">
    <property type="entry name" value="TOPRIM_GyrB"/>
</dbReference>
<dbReference type="NCBIfam" id="TIGR01059">
    <property type="entry name" value="gyrB"/>
    <property type="match status" value="1"/>
</dbReference>
<dbReference type="NCBIfam" id="NF004189">
    <property type="entry name" value="PRK05644.1"/>
    <property type="match status" value="1"/>
</dbReference>
<dbReference type="NCBIfam" id="NF011501">
    <property type="entry name" value="PRK14939.1"/>
    <property type="match status" value="1"/>
</dbReference>
<dbReference type="PANTHER" id="PTHR45866:SF1">
    <property type="entry name" value="DNA GYRASE SUBUNIT B, MITOCHONDRIAL"/>
    <property type="match status" value="1"/>
</dbReference>
<dbReference type="PANTHER" id="PTHR45866">
    <property type="entry name" value="DNA GYRASE/TOPOISOMERASE SUBUNIT B"/>
    <property type="match status" value="1"/>
</dbReference>
<dbReference type="Pfam" id="PF00204">
    <property type="entry name" value="DNA_gyraseB"/>
    <property type="match status" value="1"/>
</dbReference>
<dbReference type="Pfam" id="PF00986">
    <property type="entry name" value="DNA_gyraseB_C"/>
    <property type="match status" value="1"/>
</dbReference>
<dbReference type="Pfam" id="PF21249">
    <property type="entry name" value="GyrB_hook"/>
    <property type="match status" value="1"/>
</dbReference>
<dbReference type="Pfam" id="PF18053">
    <property type="entry name" value="GyrB_insert"/>
    <property type="match status" value="1"/>
</dbReference>
<dbReference type="Pfam" id="PF02518">
    <property type="entry name" value="HATPase_c"/>
    <property type="match status" value="1"/>
</dbReference>
<dbReference type="Pfam" id="PF01751">
    <property type="entry name" value="Toprim"/>
    <property type="match status" value="1"/>
</dbReference>
<dbReference type="PRINTS" id="PR01159">
    <property type="entry name" value="DNAGYRASEB"/>
</dbReference>
<dbReference type="PRINTS" id="PR00418">
    <property type="entry name" value="TPI2FAMILY"/>
</dbReference>
<dbReference type="SMART" id="SM00387">
    <property type="entry name" value="HATPase_c"/>
    <property type="match status" value="1"/>
</dbReference>
<dbReference type="SMART" id="SM00433">
    <property type="entry name" value="TOP2c"/>
    <property type="match status" value="1"/>
</dbReference>
<dbReference type="SUPFAM" id="SSF55874">
    <property type="entry name" value="ATPase domain of HSP90 chaperone/DNA topoisomerase II/histidine kinase"/>
    <property type="match status" value="1"/>
</dbReference>
<dbReference type="SUPFAM" id="SSF54211">
    <property type="entry name" value="Ribosomal protein S5 domain 2-like"/>
    <property type="match status" value="1"/>
</dbReference>
<dbReference type="SUPFAM" id="SSF56719">
    <property type="entry name" value="Type II DNA topoisomerase"/>
    <property type="match status" value="1"/>
</dbReference>
<dbReference type="PROSITE" id="PS00177">
    <property type="entry name" value="TOPOISOMERASE_II"/>
    <property type="match status" value="1"/>
</dbReference>
<dbReference type="PROSITE" id="PS50880">
    <property type="entry name" value="TOPRIM"/>
    <property type="match status" value="1"/>
</dbReference>
<organism>
    <name type="scientific">Salmonella typhimurium (strain LT2 / SGSC1412 / ATCC 700720)</name>
    <dbReference type="NCBI Taxonomy" id="99287"/>
    <lineage>
        <taxon>Bacteria</taxon>
        <taxon>Pseudomonadati</taxon>
        <taxon>Pseudomonadota</taxon>
        <taxon>Gammaproteobacteria</taxon>
        <taxon>Enterobacterales</taxon>
        <taxon>Enterobacteriaceae</taxon>
        <taxon>Salmonella</taxon>
    </lineage>
</organism>
<name>GYRB_SALTY</name>
<sequence>MSNSYDSSSIKVLKGLDAVRKRPGMYIGDTDDGTGLHHMVFEVVDNAIDEALAGHCKDIVVTIHADNSVSVTDDGRGIPTGIHPEEGVSAAEVIMTVLHAGGKFDDNSYKVSGGLHGVGVSVVNALSQKLELVIQRDGKIHRQIYEHGVPQAPLAVTGDTDKTGTMVRFWPSHETFTNVTEFEYEILAKRLRELSFLNSGVSIRLRDKRDGKEDHFHYEGGIKAFVEYLNKNKTPIHPNIFYFSTEKDGIGVEVALQWNDGFQENIYCFTNNIPQRDGGTHLAGFRAAMTRTLNAYMDKEGYSKKAKVSATGDDAREGLIAVVSVKVPDPKFSSQTKDKLVSSEVKSAVEQQMNELLSEYLLENPSDAKIVVGKIIDAARAREAARRAREMTRRKGALDLAGLPGKLADCQERDPALSELYLVEGDSAGGSAKQGRNRKNQAILPLKGKILNVEKARFDKMLSSQEVATLITALGCGIGRDEYNPDKLRYHSIIIMTDADVDGSHIRTLLLTFFYRQMPEIVERGHVYIAQPPLYKVKKGKQEQYIKDDEAMDQYQISIALDGATLHANAHAPALSGEALEKLVSEYNATQKMIGRMERRFPKALLKELVYQPTLTEADLSDEQTVTRWVNALITELNEKEQHGSQWKFDVHTNTEQNLFEPIVRVRTHGVDTDYPLDHEFVTGAEYRRICTLGEKLRGLIEEDAFIERGERRQPVTSFEQALEWLVKESRRGLAIQRYKGLGEMNPDQLWETTMDPESRRMLRVTVKDAIAADQLFTTLMGDAVEPRRAFIEENALKAANIDI</sequence>
<gene>
    <name evidence="2" type="primary">gyrB</name>
    <name type="ordered locus">STM3835</name>
</gene>